<accession>A1BJ68</accession>
<dbReference type="EC" id="2.3.1.234" evidence="1"/>
<dbReference type="EMBL" id="CP000492">
    <property type="protein sequence ID" value="ABL66445.1"/>
    <property type="molecule type" value="Genomic_DNA"/>
</dbReference>
<dbReference type="RefSeq" id="WP_011746227.1">
    <property type="nucleotide sequence ID" value="NC_008639.1"/>
</dbReference>
<dbReference type="SMR" id="A1BJ68"/>
<dbReference type="STRING" id="290317.Cpha266_2457"/>
<dbReference type="KEGG" id="cph:Cpha266_2457"/>
<dbReference type="eggNOG" id="COG0533">
    <property type="taxonomic scope" value="Bacteria"/>
</dbReference>
<dbReference type="HOGENOM" id="CLU_023208_0_2_10"/>
<dbReference type="OrthoDB" id="9806197at2"/>
<dbReference type="Proteomes" id="UP000008701">
    <property type="component" value="Chromosome"/>
</dbReference>
<dbReference type="GO" id="GO:0005737">
    <property type="term" value="C:cytoplasm"/>
    <property type="evidence" value="ECO:0007669"/>
    <property type="project" value="UniProtKB-SubCell"/>
</dbReference>
<dbReference type="GO" id="GO:0005506">
    <property type="term" value="F:iron ion binding"/>
    <property type="evidence" value="ECO:0007669"/>
    <property type="project" value="UniProtKB-UniRule"/>
</dbReference>
<dbReference type="GO" id="GO:0061711">
    <property type="term" value="F:N(6)-L-threonylcarbamoyladenine synthase activity"/>
    <property type="evidence" value="ECO:0007669"/>
    <property type="project" value="UniProtKB-EC"/>
</dbReference>
<dbReference type="GO" id="GO:0002949">
    <property type="term" value="P:tRNA threonylcarbamoyladenosine modification"/>
    <property type="evidence" value="ECO:0007669"/>
    <property type="project" value="UniProtKB-UniRule"/>
</dbReference>
<dbReference type="CDD" id="cd24133">
    <property type="entry name" value="ASKHA_NBD_TsaD_bac"/>
    <property type="match status" value="1"/>
</dbReference>
<dbReference type="FunFam" id="3.30.420.40:FF:000012">
    <property type="entry name" value="tRNA N6-adenosine threonylcarbamoyltransferase"/>
    <property type="match status" value="1"/>
</dbReference>
<dbReference type="FunFam" id="3.30.420.40:FF:000040">
    <property type="entry name" value="tRNA N6-adenosine threonylcarbamoyltransferase"/>
    <property type="match status" value="1"/>
</dbReference>
<dbReference type="Gene3D" id="3.30.420.40">
    <property type="match status" value="2"/>
</dbReference>
<dbReference type="HAMAP" id="MF_01445">
    <property type="entry name" value="TsaD"/>
    <property type="match status" value="1"/>
</dbReference>
<dbReference type="InterPro" id="IPR043129">
    <property type="entry name" value="ATPase_NBD"/>
</dbReference>
<dbReference type="InterPro" id="IPR000905">
    <property type="entry name" value="Gcp-like_dom"/>
</dbReference>
<dbReference type="InterPro" id="IPR017861">
    <property type="entry name" value="KAE1/TsaD"/>
</dbReference>
<dbReference type="InterPro" id="IPR022450">
    <property type="entry name" value="TsaD"/>
</dbReference>
<dbReference type="NCBIfam" id="TIGR00329">
    <property type="entry name" value="gcp_kae1"/>
    <property type="match status" value="1"/>
</dbReference>
<dbReference type="NCBIfam" id="TIGR03723">
    <property type="entry name" value="T6A_TsaD_YgjD"/>
    <property type="match status" value="1"/>
</dbReference>
<dbReference type="PANTHER" id="PTHR11735">
    <property type="entry name" value="TRNA N6-ADENOSINE THREONYLCARBAMOYLTRANSFERASE"/>
    <property type="match status" value="1"/>
</dbReference>
<dbReference type="PANTHER" id="PTHR11735:SF6">
    <property type="entry name" value="TRNA N6-ADENOSINE THREONYLCARBAMOYLTRANSFERASE, MITOCHONDRIAL"/>
    <property type="match status" value="1"/>
</dbReference>
<dbReference type="Pfam" id="PF00814">
    <property type="entry name" value="TsaD"/>
    <property type="match status" value="1"/>
</dbReference>
<dbReference type="PRINTS" id="PR00789">
    <property type="entry name" value="OSIALOPTASE"/>
</dbReference>
<dbReference type="SUPFAM" id="SSF53067">
    <property type="entry name" value="Actin-like ATPase domain"/>
    <property type="match status" value="1"/>
</dbReference>
<name>TSAD_CHLPD</name>
<keyword id="KW-0012">Acyltransferase</keyword>
<keyword id="KW-0963">Cytoplasm</keyword>
<keyword id="KW-0408">Iron</keyword>
<keyword id="KW-0479">Metal-binding</keyword>
<keyword id="KW-1185">Reference proteome</keyword>
<keyword id="KW-0808">Transferase</keyword>
<keyword id="KW-0819">tRNA processing</keyword>
<sequence>MKILGIETSCDETSAAVLSNGSVCSNIVSSQLCHTSFGGVVPELASREHERLIVSIVDSALSEANITKNDLDVIAATAGPGLIGAVMVGLCFGQAMAYALAIPFVPVNHIEAHIFSAFIQETPHHQAPEGDFISLTVSGGHTLLSHVHKDFTYEVIGRTLDDAAGEAFDKTGKMLGLPYPAGPVIDRLAKNGDPFFHEFPRALTAHSQTSKNYRGNSDFSFSGLKTSVLTFLKKQSPEFIEKHLPDIAASVQKAIVSVLVEKTVSAALAGNVKAISIAGGVSANSALRTSMKKACEQHGIAFHVPNAEYSTDNAAMIATLAGLLLAHDLVPRNRYNIAPFASFAAGRRKASLT</sequence>
<gene>
    <name evidence="1" type="primary">tsaD</name>
    <name type="synonym">gcp</name>
    <name type="ordered locus">Cpha266_2457</name>
</gene>
<feature type="chain" id="PRO_0000303323" description="tRNA N6-adenosine threonylcarbamoyltransferase">
    <location>
        <begin position="1"/>
        <end position="353"/>
    </location>
</feature>
<feature type="binding site" evidence="1">
    <location>
        <position position="109"/>
    </location>
    <ligand>
        <name>Fe cation</name>
        <dbReference type="ChEBI" id="CHEBI:24875"/>
    </ligand>
</feature>
<feature type="binding site" evidence="1">
    <location>
        <position position="113"/>
    </location>
    <ligand>
        <name>Fe cation</name>
        <dbReference type="ChEBI" id="CHEBI:24875"/>
    </ligand>
</feature>
<feature type="binding site" evidence="1">
    <location>
        <begin position="136"/>
        <end position="140"/>
    </location>
    <ligand>
        <name>substrate</name>
    </ligand>
</feature>
<feature type="binding site" evidence="1">
    <location>
        <position position="169"/>
    </location>
    <ligand>
        <name>substrate</name>
    </ligand>
</feature>
<feature type="binding site" evidence="1">
    <location>
        <position position="182"/>
    </location>
    <ligand>
        <name>substrate</name>
    </ligand>
</feature>
<feature type="binding site" evidence="1">
    <location>
        <position position="186"/>
    </location>
    <ligand>
        <name>substrate</name>
    </ligand>
</feature>
<feature type="binding site" evidence="1">
    <location>
        <position position="284"/>
    </location>
    <ligand>
        <name>substrate</name>
    </ligand>
</feature>
<feature type="binding site" evidence="1">
    <location>
        <position position="312"/>
    </location>
    <ligand>
        <name>Fe cation</name>
        <dbReference type="ChEBI" id="CHEBI:24875"/>
    </ligand>
</feature>
<evidence type="ECO:0000255" key="1">
    <source>
        <dbReference type="HAMAP-Rule" id="MF_01445"/>
    </source>
</evidence>
<reference key="1">
    <citation type="submission" date="2006-12" db="EMBL/GenBank/DDBJ databases">
        <title>Complete sequence of Chlorobium phaeobacteroides DSM 266.</title>
        <authorList>
            <consortium name="US DOE Joint Genome Institute"/>
            <person name="Copeland A."/>
            <person name="Lucas S."/>
            <person name="Lapidus A."/>
            <person name="Barry K."/>
            <person name="Detter J.C."/>
            <person name="Glavina del Rio T."/>
            <person name="Hammon N."/>
            <person name="Israni S."/>
            <person name="Pitluck S."/>
            <person name="Goltsman E."/>
            <person name="Schmutz J."/>
            <person name="Larimer F."/>
            <person name="Land M."/>
            <person name="Hauser L."/>
            <person name="Mikhailova N."/>
            <person name="Li T."/>
            <person name="Overmann J."/>
            <person name="Bryant D.A."/>
            <person name="Richardson P."/>
        </authorList>
    </citation>
    <scope>NUCLEOTIDE SEQUENCE [LARGE SCALE GENOMIC DNA]</scope>
    <source>
        <strain>DSM 266 / SMG 266 / 2430</strain>
    </source>
</reference>
<protein>
    <recommendedName>
        <fullName evidence="1">tRNA N6-adenosine threonylcarbamoyltransferase</fullName>
        <ecNumber evidence="1">2.3.1.234</ecNumber>
    </recommendedName>
    <alternativeName>
        <fullName evidence="1">N6-L-threonylcarbamoyladenine synthase</fullName>
        <shortName evidence="1">t(6)A synthase</shortName>
    </alternativeName>
    <alternativeName>
        <fullName evidence="1">t(6)A37 threonylcarbamoyladenosine biosynthesis protein TsaD</fullName>
    </alternativeName>
    <alternativeName>
        <fullName evidence="1">tRNA threonylcarbamoyladenosine biosynthesis protein TsaD</fullName>
    </alternativeName>
</protein>
<organism>
    <name type="scientific">Chlorobium phaeobacteroides (strain DSM 266 / SMG 266 / 2430)</name>
    <dbReference type="NCBI Taxonomy" id="290317"/>
    <lineage>
        <taxon>Bacteria</taxon>
        <taxon>Pseudomonadati</taxon>
        <taxon>Chlorobiota</taxon>
        <taxon>Chlorobiia</taxon>
        <taxon>Chlorobiales</taxon>
        <taxon>Chlorobiaceae</taxon>
        <taxon>Chlorobium/Pelodictyon group</taxon>
        <taxon>Chlorobium</taxon>
    </lineage>
</organism>
<proteinExistence type="inferred from homology"/>
<comment type="function">
    <text evidence="1">Required for the formation of a threonylcarbamoyl group on adenosine at position 37 (t(6)A37) in tRNAs that read codons beginning with adenine. Is involved in the transfer of the threonylcarbamoyl moiety of threonylcarbamoyl-AMP (TC-AMP) to the N6 group of A37, together with TsaE and TsaB. TsaD likely plays a direct catalytic role in this reaction.</text>
</comment>
<comment type="catalytic activity">
    <reaction evidence="1">
        <text>L-threonylcarbamoyladenylate + adenosine(37) in tRNA = N(6)-L-threonylcarbamoyladenosine(37) in tRNA + AMP + H(+)</text>
        <dbReference type="Rhea" id="RHEA:37059"/>
        <dbReference type="Rhea" id="RHEA-COMP:10162"/>
        <dbReference type="Rhea" id="RHEA-COMP:10163"/>
        <dbReference type="ChEBI" id="CHEBI:15378"/>
        <dbReference type="ChEBI" id="CHEBI:73682"/>
        <dbReference type="ChEBI" id="CHEBI:74411"/>
        <dbReference type="ChEBI" id="CHEBI:74418"/>
        <dbReference type="ChEBI" id="CHEBI:456215"/>
        <dbReference type="EC" id="2.3.1.234"/>
    </reaction>
</comment>
<comment type="cofactor">
    <cofactor evidence="1">
        <name>Fe(2+)</name>
        <dbReference type="ChEBI" id="CHEBI:29033"/>
    </cofactor>
    <text evidence="1">Binds 1 Fe(2+) ion per subunit.</text>
</comment>
<comment type="subcellular location">
    <subcellularLocation>
        <location evidence="1">Cytoplasm</location>
    </subcellularLocation>
</comment>
<comment type="similarity">
    <text evidence="1">Belongs to the KAE1 / TsaD family.</text>
</comment>